<name>ISPF_HAEIG</name>
<feature type="chain" id="PRO_1000022844" description="2-C-methyl-D-erythritol 2,4-cyclodiphosphate synthase">
    <location>
        <begin position="1"/>
        <end position="158"/>
    </location>
</feature>
<feature type="binding site" evidence="1">
    <location>
        <begin position="9"/>
        <end position="11"/>
    </location>
    <ligand>
        <name>4-CDP-2-C-methyl-D-erythritol 2-phosphate</name>
        <dbReference type="ChEBI" id="CHEBI:57919"/>
    </ligand>
</feature>
<feature type="binding site" evidence="1">
    <location>
        <position position="9"/>
    </location>
    <ligand>
        <name>a divalent metal cation</name>
        <dbReference type="ChEBI" id="CHEBI:60240"/>
    </ligand>
</feature>
<feature type="binding site" evidence="1">
    <location>
        <position position="11"/>
    </location>
    <ligand>
        <name>a divalent metal cation</name>
        <dbReference type="ChEBI" id="CHEBI:60240"/>
    </ligand>
</feature>
<feature type="binding site" evidence="1">
    <location>
        <begin position="35"/>
        <end position="36"/>
    </location>
    <ligand>
        <name>4-CDP-2-C-methyl-D-erythritol 2-phosphate</name>
        <dbReference type="ChEBI" id="CHEBI:57919"/>
    </ligand>
</feature>
<feature type="binding site" evidence="1">
    <location>
        <position position="43"/>
    </location>
    <ligand>
        <name>a divalent metal cation</name>
        <dbReference type="ChEBI" id="CHEBI:60240"/>
    </ligand>
</feature>
<feature type="binding site" evidence="1">
    <location>
        <begin position="57"/>
        <end position="59"/>
    </location>
    <ligand>
        <name>4-CDP-2-C-methyl-D-erythritol 2-phosphate</name>
        <dbReference type="ChEBI" id="CHEBI:57919"/>
    </ligand>
</feature>
<feature type="binding site" evidence="1">
    <location>
        <begin position="62"/>
        <end position="66"/>
    </location>
    <ligand>
        <name>4-CDP-2-C-methyl-D-erythritol 2-phosphate</name>
        <dbReference type="ChEBI" id="CHEBI:57919"/>
    </ligand>
</feature>
<feature type="binding site" evidence="1">
    <location>
        <begin position="133"/>
        <end position="136"/>
    </location>
    <ligand>
        <name>4-CDP-2-C-methyl-D-erythritol 2-phosphate</name>
        <dbReference type="ChEBI" id="CHEBI:57919"/>
    </ligand>
</feature>
<feature type="binding site" evidence="1">
    <location>
        <position position="140"/>
    </location>
    <ligand>
        <name>4-CDP-2-C-methyl-D-erythritol 2-phosphate</name>
        <dbReference type="ChEBI" id="CHEBI:57919"/>
    </ligand>
</feature>
<feature type="binding site" evidence="1">
    <location>
        <position position="143"/>
    </location>
    <ligand>
        <name>4-CDP-2-C-methyl-D-erythritol 2-phosphate</name>
        <dbReference type="ChEBI" id="CHEBI:57919"/>
    </ligand>
</feature>
<feature type="site" description="Transition state stabilizer" evidence="1">
    <location>
        <position position="35"/>
    </location>
</feature>
<feature type="site" description="Transition state stabilizer" evidence="1">
    <location>
        <position position="134"/>
    </location>
</feature>
<evidence type="ECO:0000255" key="1">
    <source>
        <dbReference type="HAMAP-Rule" id="MF_00107"/>
    </source>
</evidence>
<reference key="1">
    <citation type="journal article" date="2007" name="Genome Biol.">
        <title>Characterization and modeling of the Haemophilus influenzae core and supragenomes based on the complete genomic sequences of Rd and 12 clinical nontypeable strains.</title>
        <authorList>
            <person name="Hogg J.S."/>
            <person name="Hu F.Z."/>
            <person name="Janto B."/>
            <person name="Boissy R."/>
            <person name="Hayes J."/>
            <person name="Keefe R."/>
            <person name="Post J.C."/>
            <person name="Ehrlich G.D."/>
        </authorList>
    </citation>
    <scope>NUCLEOTIDE SEQUENCE [LARGE SCALE GENOMIC DNA]</scope>
    <source>
        <strain>PittGG</strain>
    </source>
</reference>
<gene>
    <name evidence="1" type="primary">ispF</name>
    <name type="ordered locus">CGSHiGG_06630</name>
</gene>
<organism>
    <name type="scientific">Haemophilus influenzae (strain PittGG)</name>
    <dbReference type="NCBI Taxonomy" id="374931"/>
    <lineage>
        <taxon>Bacteria</taxon>
        <taxon>Pseudomonadati</taxon>
        <taxon>Pseudomonadota</taxon>
        <taxon>Gammaproteobacteria</taxon>
        <taxon>Pasteurellales</taxon>
        <taxon>Pasteurellaceae</taxon>
        <taxon>Haemophilus</taxon>
    </lineage>
</organism>
<keyword id="KW-0414">Isoprene biosynthesis</keyword>
<keyword id="KW-0456">Lyase</keyword>
<keyword id="KW-0479">Metal-binding</keyword>
<dbReference type="EC" id="4.6.1.12" evidence="1"/>
<dbReference type="EMBL" id="CP000672">
    <property type="protein sequence ID" value="ABR00216.1"/>
    <property type="molecule type" value="Genomic_DNA"/>
</dbReference>
<dbReference type="SMR" id="A5UHG0"/>
<dbReference type="KEGG" id="hiq:CGSHiGG_06630"/>
<dbReference type="HOGENOM" id="CLU_084630_2_0_6"/>
<dbReference type="UniPathway" id="UPA00056">
    <property type="reaction ID" value="UER00095"/>
</dbReference>
<dbReference type="Proteomes" id="UP000001990">
    <property type="component" value="Chromosome"/>
</dbReference>
<dbReference type="GO" id="GO:0008685">
    <property type="term" value="F:2-C-methyl-D-erythritol 2,4-cyclodiphosphate synthase activity"/>
    <property type="evidence" value="ECO:0007669"/>
    <property type="project" value="UniProtKB-UniRule"/>
</dbReference>
<dbReference type="GO" id="GO:0046872">
    <property type="term" value="F:metal ion binding"/>
    <property type="evidence" value="ECO:0007669"/>
    <property type="project" value="UniProtKB-KW"/>
</dbReference>
<dbReference type="GO" id="GO:0019288">
    <property type="term" value="P:isopentenyl diphosphate biosynthetic process, methylerythritol 4-phosphate pathway"/>
    <property type="evidence" value="ECO:0007669"/>
    <property type="project" value="UniProtKB-UniRule"/>
</dbReference>
<dbReference type="GO" id="GO:0016114">
    <property type="term" value="P:terpenoid biosynthetic process"/>
    <property type="evidence" value="ECO:0007669"/>
    <property type="project" value="InterPro"/>
</dbReference>
<dbReference type="CDD" id="cd00554">
    <property type="entry name" value="MECDP_synthase"/>
    <property type="match status" value="1"/>
</dbReference>
<dbReference type="FunFam" id="3.30.1330.50:FF:000001">
    <property type="entry name" value="2-C-methyl-D-erythritol 2,4-cyclodiphosphate synthase"/>
    <property type="match status" value="1"/>
</dbReference>
<dbReference type="Gene3D" id="3.30.1330.50">
    <property type="entry name" value="2-C-methyl-D-erythritol 2,4-cyclodiphosphate synthase"/>
    <property type="match status" value="1"/>
</dbReference>
<dbReference type="HAMAP" id="MF_00107">
    <property type="entry name" value="IspF"/>
    <property type="match status" value="1"/>
</dbReference>
<dbReference type="InterPro" id="IPR003526">
    <property type="entry name" value="MECDP_synthase"/>
</dbReference>
<dbReference type="InterPro" id="IPR020555">
    <property type="entry name" value="MECDP_synthase_CS"/>
</dbReference>
<dbReference type="InterPro" id="IPR036571">
    <property type="entry name" value="MECDP_synthase_sf"/>
</dbReference>
<dbReference type="NCBIfam" id="TIGR00151">
    <property type="entry name" value="ispF"/>
    <property type="match status" value="1"/>
</dbReference>
<dbReference type="PANTHER" id="PTHR43181">
    <property type="entry name" value="2-C-METHYL-D-ERYTHRITOL 2,4-CYCLODIPHOSPHATE SYNTHASE, CHLOROPLASTIC"/>
    <property type="match status" value="1"/>
</dbReference>
<dbReference type="PANTHER" id="PTHR43181:SF1">
    <property type="entry name" value="2-C-METHYL-D-ERYTHRITOL 2,4-CYCLODIPHOSPHATE SYNTHASE, CHLOROPLASTIC"/>
    <property type="match status" value="1"/>
</dbReference>
<dbReference type="Pfam" id="PF02542">
    <property type="entry name" value="YgbB"/>
    <property type="match status" value="1"/>
</dbReference>
<dbReference type="SUPFAM" id="SSF69765">
    <property type="entry name" value="IpsF-like"/>
    <property type="match status" value="1"/>
</dbReference>
<dbReference type="PROSITE" id="PS01350">
    <property type="entry name" value="ISPF"/>
    <property type="match status" value="1"/>
</dbReference>
<sequence>MIRIGHGFDVHAFGEDRPLIIGGVEVPYHTGFIAHSDGDVALHALTDAILGAAALGDIGKLFPDTDMQYKNADSRGLLREAFRQVQEKGYKIGNVDITIIAQAPKMRPHIDAMRAKIAEDIQCDIEQVNVKATTTEKLGFTGRQEGIACEAVALLIRQ</sequence>
<comment type="function">
    <text evidence="1">Involved in the biosynthesis of isopentenyl diphosphate (IPP) and dimethylallyl diphosphate (DMAPP), two major building blocks of isoprenoid compounds. Catalyzes the conversion of 4-diphosphocytidyl-2-C-methyl-D-erythritol 2-phosphate (CDP-ME2P) to 2-C-methyl-D-erythritol 2,4-cyclodiphosphate (ME-CPP) with a corresponding release of cytidine 5-monophosphate (CMP).</text>
</comment>
<comment type="catalytic activity">
    <reaction evidence="1">
        <text>4-CDP-2-C-methyl-D-erythritol 2-phosphate = 2-C-methyl-D-erythritol 2,4-cyclic diphosphate + CMP</text>
        <dbReference type="Rhea" id="RHEA:23864"/>
        <dbReference type="ChEBI" id="CHEBI:57919"/>
        <dbReference type="ChEBI" id="CHEBI:58483"/>
        <dbReference type="ChEBI" id="CHEBI:60377"/>
        <dbReference type="EC" id="4.6.1.12"/>
    </reaction>
</comment>
<comment type="cofactor">
    <cofactor evidence="1">
        <name>a divalent metal cation</name>
        <dbReference type="ChEBI" id="CHEBI:60240"/>
    </cofactor>
    <text evidence="1">Binds 1 divalent metal cation per subunit.</text>
</comment>
<comment type="pathway">
    <text evidence="1">Isoprenoid biosynthesis; isopentenyl diphosphate biosynthesis via DXP pathway; isopentenyl diphosphate from 1-deoxy-D-xylulose 5-phosphate: step 4/6.</text>
</comment>
<comment type="subunit">
    <text evidence="1">Homotrimer.</text>
</comment>
<comment type="similarity">
    <text evidence="1">Belongs to the IspF family.</text>
</comment>
<proteinExistence type="inferred from homology"/>
<accession>A5UHG0</accession>
<protein>
    <recommendedName>
        <fullName evidence="1">2-C-methyl-D-erythritol 2,4-cyclodiphosphate synthase</fullName>
        <shortName evidence="1">MECDP-synthase</shortName>
        <shortName evidence="1">MECPP-synthase</shortName>
        <shortName evidence="1">MECPS</shortName>
        <ecNumber evidence="1">4.6.1.12</ecNumber>
    </recommendedName>
</protein>